<protein>
    <recommendedName>
        <fullName>THAP domain-containing protein 7</fullName>
    </recommendedName>
</protein>
<name>THAP7_HUMAN</name>
<comment type="function">
    <text evidence="6">Chromatin-associated, histone tail-binding protein that represses transcription via recruitment of HDAC3 and nuclear hormone receptor corepressors.</text>
</comment>
<comment type="subunit">
    <text evidence="6 7">Forms homodimers (PubMed:31905202). Interacts with HDAC3 and nuclear hormone receptor corepressors (PubMed:15561719). Interacts via HBM with HCFC1 (PubMed:31905202).</text>
</comment>
<comment type="interaction">
    <interactant intactId="EBI-741350">
        <id>Q9BT49</id>
    </interactant>
    <interactant intactId="EBI-359567">
        <id>O15084</id>
        <label>ANKRD28</label>
    </interactant>
    <organismsDiffer>false</organismsDiffer>
    <experiments>3</experiments>
</comment>
<comment type="interaction">
    <interactant intactId="EBI-741350">
        <id>Q9BT49</id>
    </interactant>
    <interactant intactId="EBI-1049597">
        <id>P27797</id>
        <label>CALR</label>
    </interactant>
    <organismsDiffer>false</organismsDiffer>
    <experiments>3</experiments>
</comment>
<comment type="interaction">
    <interactant intactId="EBI-741350">
        <id>Q9BT49</id>
    </interactant>
    <interactant intactId="EBI-748961">
        <id>O95273</id>
        <label>CCNDBP1</label>
    </interactant>
    <organismsDiffer>false</organismsDiffer>
    <experiments>4</experiments>
</comment>
<comment type="interaction">
    <interactant intactId="EBI-741350">
        <id>Q9BT49</id>
    </interactant>
    <interactant intactId="EBI-295634">
        <id>Q16543</id>
        <label>CDC37</label>
    </interactant>
    <organismsDiffer>false</organismsDiffer>
    <experiments>3</experiments>
</comment>
<comment type="interaction">
    <interactant intactId="EBI-741350">
        <id>Q9BT49</id>
    </interactant>
    <interactant intactId="EBI-727477">
        <id>P12830</id>
        <label>CDH1</label>
    </interactant>
    <organismsDiffer>false</organismsDiffer>
    <experiments>3</experiments>
</comment>
<comment type="interaction">
    <interactant intactId="EBI-741350">
        <id>Q9BT49</id>
    </interactant>
    <interactant intactId="EBI-746189">
        <id>Q15078</id>
        <label>CDK5R1</label>
    </interactant>
    <organismsDiffer>false</organismsDiffer>
    <experiments>3</experiments>
</comment>
<comment type="interaction">
    <interactant intactId="EBI-741350">
        <id>Q9BT49</id>
    </interactant>
    <interactant intactId="EBI-3867333">
        <id>A8MQ03</id>
        <label>CYSRT1</label>
    </interactant>
    <organismsDiffer>false</organismsDiffer>
    <experiments>3</experiments>
</comment>
<comment type="interaction">
    <interactant intactId="EBI-741350">
        <id>Q9BT49</id>
    </interactant>
    <interactant intactId="EBI-12878374">
        <id>Q9BSY9</id>
        <label>DESI2</label>
    </interactant>
    <organismsDiffer>false</organismsDiffer>
    <experiments>3</experiments>
</comment>
<comment type="interaction">
    <interactant intactId="EBI-741350">
        <id>Q9BT49</id>
    </interactant>
    <interactant intactId="EBI-351007">
        <id>P36957</id>
        <label>DLST</label>
    </interactant>
    <organismsDiffer>false</organismsDiffer>
    <experiments>3</experiments>
</comment>
<comment type="interaction">
    <interactant intactId="EBI-741350">
        <id>Q9BT49</id>
    </interactant>
    <interactant intactId="EBI-739789">
        <id>Q92997</id>
        <label>DVL3</label>
    </interactant>
    <organismsDiffer>false</organismsDiffer>
    <experiments>3</experiments>
</comment>
<comment type="interaction">
    <interactant intactId="EBI-741350">
        <id>Q9BT49</id>
    </interactant>
    <interactant intactId="EBI-743414">
        <id>O95967</id>
        <label>EFEMP2</label>
    </interactant>
    <organismsDiffer>false</organismsDiffer>
    <experiments>3</experiments>
</comment>
<comment type="interaction">
    <interactant intactId="EBI-741350">
        <id>Q9BT49</id>
    </interactant>
    <interactant intactId="EBI-741101">
        <id>Q13643</id>
        <label>FHL3</label>
    </interactant>
    <organismsDiffer>false</organismsDiffer>
    <experiments>3</experiments>
</comment>
<comment type="interaction">
    <interactant intactId="EBI-741350">
        <id>Q9BT49</id>
    </interactant>
    <interactant intactId="EBI-5661036">
        <id>A1L4K1</id>
        <label>FSD2</label>
    </interactant>
    <organismsDiffer>false</organismsDiffer>
    <experiments>3</experiments>
</comment>
<comment type="interaction">
    <interactant intactId="EBI-741350">
        <id>Q9BT49</id>
    </interactant>
    <interactant intactId="EBI-746969">
        <id>Q9H0R8</id>
        <label>GABARAPL1</label>
    </interactant>
    <organismsDiffer>false</organismsDiffer>
    <experiments>3</experiments>
</comment>
<comment type="interaction">
    <interactant intactId="EBI-741350">
        <id>Q9BT49</id>
    </interactant>
    <interactant intactId="EBI-618309">
        <id>Q08379</id>
        <label>GOLGA2</label>
    </interactant>
    <organismsDiffer>false</organismsDiffer>
    <experiments>4</experiments>
</comment>
<comment type="interaction">
    <interactant intactId="EBI-741350">
        <id>Q9BT49</id>
    </interactant>
    <interactant intactId="EBI-5916454">
        <id>A6NEM1</id>
        <label>GOLGA6L9</label>
    </interactant>
    <organismsDiffer>false</organismsDiffer>
    <experiments>3</experiments>
</comment>
<comment type="interaction">
    <interactant intactId="EBI-741350">
        <id>Q9BT49</id>
    </interactant>
    <interactant intactId="EBI-740785">
        <id>P49639</id>
        <label>HOXA1</label>
    </interactant>
    <organismsDiffer>false</organismsDiffer>
    <experiments>3</experiments>
</comment>
<comment type="interaction">
    <interactant intactId="EBI-741350">
        <id>Q9BT49</id>
    </interactant>
    <interactant intactId="EBI-3044087">
        <id>Q7Z3Y8</id>
        <label>KRT27</label>
    </interactant>
    <organismsDiffer>false</organismsDiffer>
    <experiments>3</experiments>
</comment>
<comment type="interaction">
    <interactant intactId="EBI-741350">
        <id>Q9BT49</id>
    </interactant>
    <interactant intactId="EBI-948001">
        <id>Q15323</id>
        <label>KRT31</label>
    </interactant>
    <organismsDiffer>false</organismsDiffer>
    <experiments>6</experiments>
</comment>
<comment type="interaction">
    <interactant intactId="EBI-741350">
        <id>Q9BT49</id>
    </interactant>
    <interactant intactId="EBI-1047093">
        <id>O76011</id>
        <label>KRT34</label>
    </interactant>
    <organismsDiffer>false</organismsDiffer>
    <experiments>3</experiments>
</comment>
<comment type="interaction">
    <interactant intactId="EBI-741350">
        <id>Q9BT49</id>
    </interactant>
    <interactant intactId="EBI-10171697">
        <id>Q6A162</id>
        <label>KRT40</label>
    </interactant>
    <organismsDiffer>false</organismsDiffer>
    <experiments>3</experiments>
</comment>
<comment type="interaction">
    <interactant intactId="EBI-741350">
        <id>Q9BT49</id>
    </interactant>
    <interactant intactId="EBI-11749135">
        <id>Q8IUG1</id>
        <label>KRTAP1-3</label>
    </interactant>
    <organismsDiffer>false</organismsDiffer>
    <experiments>3</experiments>
</comment>
<comment type="interaction">
    <interactant intactId="EBI-741350">
        <id>Q9BT49</id>
    </interactant>
    <interactant intactId="EBI-10171774">
        <id>P60410</id>
        <label>KRTAP10-8</label>
    </interactant>
    <organismsDiffer>false</organismsDiffer>
    <experiments>6</experiments>
</comment>
<comment type="interaction">
    <interactant intactId="EBI-741350">
        <id>Q9BT49</id>
    </interactant>
    <interactant intactId="EBI-11988175">
        <id>Q9BYP8</id>
        <label>KRTAP17-1</label>
    </interactant>
    <organismsDiffer>false</organismsDiffer>
    <experiments>3</experiments>
</comment>
<comment type="interaction">
    <interactant intactId="EBI-741350">
        <id>Q9BT49</id>
    </interactant>
    <interactant intactId="EBI-740738">
        <id>O95751</id>
        <label>LDOC1</label>
    </interactant>
    <organismsDiffer>false</organismsDiffer>
    <experiments>3</experiments>
</comment>
<comment type="interaction">
    <interactant intactId="EBI-741350">
        <id>Q9BT49</id>
    </interactant>
    <interactant intactId="EBI-739832">
        <id>Q8TBB1</id>
        <label>LNX1</label>
    </interactant>
    <organismsDiffer>false</organismsDiffer>
    <experiments>3</experiments>
</comment>
<comment type="interaction">
    <interactant intactId="EBI-741350">
        <id>Q9BT49</id>
    </interactant>
    <interactant intactId="EBI-741037">
        <id>Q9BRK4</id>
        <label>LZTS2</label>
    </interactant>
    <organismsDiffer>false</organismsDiffer>
    <experiments>6</experiments>
</comment>
<comment type="interaction">
    <interactant intactId="EBI-741350">
        <id>Q9BT49</id>
    </interactant>
    <interactant intactId="EBI-746778">
        <id>Q96A72</id>
        <label>MAGOHB</label>
    </interactant>
    <organismsDiffer>false</organismsDiffer>
    <experiments>3</experiments>
</comment>
<comment type="interaction">
    <interactant intactId="EBI-741350">
        <id>Q9BT49</id>
    </interactant>
    <interactant intactId="EBI-307531">
        <id>P23508</id>
        <label>MCC</label>
    </interactant>
    <organismsDiffer>false</organismsDiffer>
    <experiments>3</experiments>
</comment>
<comment type="interaction">
    <interactant intactId="EBI-741350">
        <id>Q9BT49</id>
    </interactant>
    <interactant intactId="EBI-10172526">
        <id>Q9UJV3-2</id>
        <label>MID2</label>
    </interactant>
    <organismsDiffer>false</organismsDiffer>
    <experiments>6</experiments>
</comment>
<comment type="interaction">
    <interactant intactId="EBI-741350">
        <id>Q9BT49</id>
    </interactant>
    <interactant intactId="EBI-742948">
        <id>Q5JR59</id>
        <label>MTUS2</label>
    </interactant>
    <organismsDiffer>false</organismsDiffer>
    <experiments>3</experiments>
</comment>
<comment type="interaction">
    <interactant intactId="EBI-741350">
        <id>Q9BT49</id>
    </interactant>
    <interactant intactId="EBI-11522433">
        <id>Q5JR59-3</id>
        <label>MTUS2</label>
    </interactant>
    <organismsDiffer>false</organismsDiffer>
    <experiments>6</experiments>
</comment>
<comment type="interaction">
    <interactant intactId="EBI-741350">
        <id>Q9BT49</id>
    </interactant>
    <interactant intactId="EBI-1055945">
        <id>Q8TDX7</id>
        <label>NEK7</label>
    </interactant>
    <organismsDiffer>false</organismsDiffer>
    <experiments>3</experiments>
</comment>
<comment type="interaction">
    <interactant intactId="EBI-741350">
        <id>Q9BT49</id>
    </interactant>
    <interactant intactId="EBI-945833">
        <id>Q7Z3S9</id>
        <label>NOTCH2NLA</label>
    </interactant>
    <organismsDiffer>false</organismsDiffer>
    <experiments>4</experiments>
</comment>
<comment type="interaction">
    <interactant intactId="EBI-741350">
        <id>Q9BT49</id>
    </interactant>
    <interactant intactId="EBI-22310682">
        <id>P0DPK4</id>
        <label>NOTCH2NLC</label>
    </interactant>
    <organismsDiffer>false</organismsDiffer>
    <experiments>3</experiments>
</comment>
<comment type="interaction">
    <interactant intactId="EBI-741350">
        <id>Q9BT49</id>
    </interactant>
    <interactant intactId="EBI-741158">
        <id>Q96HA8</id>
        <label>NTAQ1</label>
    </interactant>
    <organismsDiffer>false</organismsDiffer>
    <experiments>3</experiments>
</comment>
<comment type="interaction">
    <interactant intactId="EBI-741350">
        <id>Q9BT49</id>
    </interactant>
    <interactant intactId="EBI-713786">
        <id>Q8IXK0</id>
        <label>PHC2</label>
    </interactant>
    <organismsDiffer>false</organismsDiffer>
    <experiments>3</experiments>
</comment>
<comment type="interaction">
    <interactant intactId="EBI-741350">
        <id>Q9BT49</id>
    </interactant>
    <interactant intactId="EBI-2339674">
        <id>Q5T6S3</id>
        <label>PHF19</label>
    </interactant>
    <organismsDiffer>false</organismsDiffer>
    <experiments>3</experiments>
</comment>
<comment type="interaction">
    <interactant intactId="EBI-741350">
        <id>Q9BT49</id>
    </interactant>
    <interactant intactId="EBI-79165">
        <id>Q9NRD5</id>
        <label>PICK1</label>
    </interactant>
    <organismsDiffer>false</organismsDiffer>
    <experiments>3</experiments>
</comment>
<comment type="interaction">
    <interactant intactId="EBI-741350">
        <id>Q9BT49</id>
    </interactant>
    <interactant intactId="EBI-714158">
        <id>Q13526</id>
        <label>PIN1</label>
    </interactant>
    <organismsDiffer>false</organismsDiffer>
    <experiments>5</experiments>
</comment>
<comment type="interaction">
    <interactant intactId="EBI-741350">
        <id>Q9BT49</id>
    </interactant>
    <interactant intactId="EBI-302355">
        <id>Q9UL42</id>
        <label>PNMA2</label>
    </interactant>
    <organismsDiffer>false</organismsDiffer>
    <experiments>3</experiments>
</comment>
<comment type="interaction">
    <interactant intactId="EBI-741350">
        <id>Q9BT49</id>
    </interactant>
    <interactant intactId="EBI-1053182">
        <id>Q01105</id>
        <label>SET</label>
    </interactant>
    <organismsDiffer>false</organismsDiffer>
    <experiments>7</experiments>
</comment>
<comment type="interaction">
    <interactant intactId="EBI-741350">
        <id>Q9BT49</id>
    </interactant>
    <interactant intactId="EBI-7481343">
        <id>Q01105-2</id>
        <label>SET</label>
    </interactant>
    <organismsDiffer>false</organismsDiffer>
    <experiments>5</experiments>
</comment>
<comment type="interaction">
    <interactant intactId="EBI-741350">
        <id>Q9BT49</id>
    </interactant>
    <interactant intactId="EBI-1105213">
        <id>Q9UBB9</id>
        <label>TFIP11</label>
    </interactant>
    <organismsDiffer>false</organismsDiffer>
    <experiments>7</experiments>
</comment>
<comment type="interaction">
    <interactant intactId="EBI-741350">
        <id>Q9BT49</id>
    </interactant>
    <interactant intactId="EBI-741350">
        <id>Q9BT49</id>
        <label>THAP7</label>
    </interactant>
    <organismsDiffer>false</organismsDiffer>
    <experiments>6</experiments>
</comment>
<comment type="interaction">
    <interactant intactId="EBI-741350">
        <id>Q9BT49</id>
    </interactant>
    <interactant intactId="EBI-11741437">
        <id>Q08117-2</id>
        <label>TLE5</label>
    </interactant>
    <organismsDiffer>false</organismsDiffer>
    <experiments>3</experiments>
</comment>
<comment type="interaction">
    <interactant intactId="EBI-741350">
        <id>Q9BT49</id>
    </interactant>
    <interactant intactId="EBI-355607">
        <id>P06753</id>
        <label>TPM3</label>
    </interactant>
    <organismsDiffer>false</organismsDiffer>
    <experiments>3</experiments>
</comment>
<comment type="interaction">
    <interactant intactId="EBI-741350">
        <id>Q9BT49</id>
    </interactant>
    <interactant intactId="EBI-359224">
        <id>Q13077</id>
        <label>TRAF1</label>
    </interactant>
    <organismsDiffer>false</organismsDiffer>
    <experiments>6</experiments>
</comment>
<comment type="interaction">
    <interactant intactId="EBI-741350">
        <id>Q9BT49</id>
    </interactant>
    <interactant intactId="EBI-355744">
        <id>Q12933</id>
        <label>TRAF2</label>
    </interactant>
    <organismsDiffer>false</organismsDiffer>
    <experiments>13</experiments>
</comment>
<comment type="interaction">
    <interactant intactId="EBI-741350">
        <id>Q9BT49</id>
    </interactant>
    <interactant intactId="EBI-523498">
        <id>O00463</id>
        <label>TRAF5</label>
    </interactant>
    <organismsDiffer>false</organismsDiffer>
    <experiments>3</experiments>
</comment>
<comment type="interaction">
    <interactant intactId="EBI-741350">
        <id>Q9BT49</id>
    </interactant>
    <interactant intactId="EBI-527853">
        <id>Q9UGI0</id>
        <label>ZRANB1</label>
    </interactant>
    <organismsDiffer>false</organismsDiffer>
    <experiments>3</experiments>
</comment>
<comment type="subcellular location">
    <subcellularLocation>
        <location>Nucleus</location>
    </subcellularLocation>
    <subcellularLocation>
        <location>Chromosome</location>
    </subcellularLocation>
</comment>
<feature type="chain" id="PRO_0000068648" description="THAP domain-containing protein 7">
    <location>
        <begin position="1"/>
        <end position="309"/>
    </location>
</feature>
<feature type="zinc finger region" description="THAP-type" evidence="2">
    <location>
        <begin position="1"/>
        <end position="93"/>
    </location>
</feature>
<feature type="region of interest" description="Disordered" evidence="3">
    <location>
        <begin position="158"/>
        <end position="209"/>
    </location>
</feature>
<feature type="short sequence motif" description="HCFC1-binding motif (HBM)" evidence="1">
    <location>
        <begin position="229"/>
        <end position="232"/>
    </location>
</feature>
<feature type="compositionally biased region" description="Pro residues" evidence="3">
    <location>
        <begin position="198"/>
        <end position="209"/>
    </location>
</feature>
<feature type="modified residue" description="Phosphoserine" evidence="10">
    <location>
        <position position="162"/>
    </location>
</feature>
<feature type="modified residue" description="Phosphoserine" evidence="9">
    <location>
        <position position="210"/>
    </location>
</feature>
<feature type="sequence variant" id="VAR_060277" description="In dbSNP:rs426938." evidence="4 5 8">
    <original>A</original>
    <variation>P</variation>
    <location>
        <position position="115"/>
    </location>
</feature>
<proteinExistence type="evidence at protein level"/>
<dbReference type="EMBL" id="CR456343">
    <property type="protein sequence ID" value="CAG30229.1"/>
    <property type="molecule type" value="mRNA"/>
</dbReference>
<dbReference type="EMBL" id="AK315457">
    <property type="protein sequence ID" value="BAG37844.1"/>
    <property type="molecule type" value="mRNA"/>
</dbReference>
<dbReference type="EMBL" id="AC002472">
    <property type="status" value="NOT_ANNOTATED_CDS"/>
    <property type="molecule type" value="Genomic_DNA"/>
</dbReference>
<dbReference type="EMBL" id="CH471176">
    <property type="protein sequence ID" value="EAX02919.1"/>
    <property type="molecule type" value="Genomic_DNA"/>
</dbReference>
<dbReference type="EMBL" id="CH471176">
    <property type="protein sequence ID" value="EAX02921.1"/>
    <property type="molecule type" value="Genomic_DNA"/>
</dbReference>
<dbReference type="EMBL" id="BC004346">
    <property type="protein sequence ID" value="AAH04346.1"/>
    <property type="molecule type" value="mRNA"/>
</dbReference>
<dbReference type="CCDS" id="CCDS13787.1"/>
<dbReference type="RefSeq" id="NP_001008695.1">
    <property type="nucleotide sequence ID" value="NM_001008695.1"/>
</dbReference>
<dbReference type="RefSeq" id="NP_085050.2">
    <property type="nucleotide sequence ID" value="NM_030573.3"/>
</dbReference>
<dbReference type="SMR" id="Q9BT49"/>
<dbReference type="BioGRID" id="123298">
    <property type="interactions" value="98"/>
</dbReference>
<dbReference type="ELM" id="Q9BT49"/>
<dbReference type="FunCoup" id="Q9BT49">
    <property type="interactions" value="1531"/>
</dbReference>
<dbReference type="IntAct" id="Q9BT49">
    <property type="interactions" value="77"/>
</dbReference>
<dbReference type="MINT" id="Q9BT49"/>
<dbReference type="STRING" id="9606.ENSP00000215742"/>
<dbReference type="GlyGen" id="Q9BT49">
    <property type="glycosylation" value="1 site"/>
</dbReference>
<dbReference type="iPTMnet" id="Q9BT49"/>
<dbReference type="PhosphoSitePlus" id="Q9BT49"/>
<dbReference type="BioMuta" id="THAP7"/>
<dbReference type="DMDM" id="296452927"/>
<dbReference type="jPOST" id="Q9BT49"/>
<dbReference type="MassIVE" id="Q9BT49"/>
<dbReference type="PaxDb" id="9606-ENSP00000215742"/>
<dbReference type="PeptideAtlas" id="Q9BT49"/>
<dbReference type="ProteomicsDB" id="78951"/>
<dbReference type="Pumba" id="Q9BT49"/>
<dbReference type="Antibodypedia" id="314">
    <property type="antibodies" value="26 antibodies from 10 providers"/>
</dbReference>
<dbReference type="DNASU" id="80764"/>
<dbReference type="Ensembl" id="ENST00000215742.9">
    <property type="protein sequence ID" value="ENSP00000215742.4"/>
    <property type="gene ID" value="ENSG00000184436.12"/>
</dbReference>
<dbReference type="Ensembl" id="ENST00000399133.2">
    <property type="protein sequence ID" value="ENSP00000382084.2"/>
    <property type="gene ID" value="ENSG00000184436.12"/>
</dbReference>
<dbReference type="GeneID" id="80764"/>
<dbReference type="KEGG" id="hsa:80764"/>
<dbReference type="MANE-Select" id="ENST00000215742.9">
    <property type="protein sequence ID" value="ENSP00000215742.4"/>
    <property type="RefSeq nucleotide sequence ID" value="NM_030573.3"/>
    <property type="RefSeq protein sequence ID" value="NP_085050.2"/>
</dbReference>
<dbReference type="UCSC" id="uc002ztr.2">
    <property type="organism name" value="human"/>
</dbReference>
<dbReference type="AGR" id="HGNC:23190"/>
<dbReference type="CTD" id="80764"/>
<dbReference type="DisGeNET" id="80764"/>
<dbReference type="GeneCards" id="THAP7"/>
<dbReference type="HGNC" id="HGNC:23190">
    <property type="gene designation" value="THAP7"/>
</dbReference>
<dbReference type="HPA" id="ENSG00000184436">
    <property type="expression patterns" value="Low tissue specificity"/>
</dbReference>
<dbReference type="MIM" id="609518">
    <property type="type" value="gene"/>
</dbReference>
<dbReference type="neXtProt" id="NX_Q9BT49"/>
<dbReference type="OpenTargets" id="ENSG00000184436"/>
<dbReference type="PharmGKB" id="PA134964580"/>
<dbReference type="VEuPathDB" id="HostDB:ENSG00000184436"/>
<dbReference type="eggNOG" id="ENOG502QT6V">
    <property type="taxonomic scope" value="Eukaryota"/>
</dbReference>
<dbReference type="GeneTree" id="ENSGT00730000111394"/>
<dbReference type="HOGENOM" id="CLU_050704_0_0_1"/>
<dbReference type="InParanoid" id="Q9BT49"/>
<dbReference type="OMA" id="YPPGPHD"/>
<dbReference type="OrthoDB" id="7312725at2759"/>
<dbReference type="PAN-GO" id="Q9BT49">
    <property type="GO annotations" value="2 GO annotations based on evolutionary models"/>
</dbReference>
<dbReference type="PhylomeDB" id="Q9BT49"/>
<dbReference type="TreeFam" id="TF335838"/>
<dbReference type="PathwayCommons" id="Q9BT49"/>
<dbReference type="SignaLink" id="Q9BT49"/>
<dbReference type="BioGRID-ORCS" id="80764">
    <property type="hits" value="55 hits in 1181 CRISPR screens"/>
</dbReference>
<dbReference type="ChiTaRS" id="THAP7">
    <property type="organism name" value="human"/>
</dbReference>
<dbReference type="GeneWiki" id="THAP7"/>
<dbReference type="GenomeRNAi" id="80764"/>
<dbReference type="Pharos" id="Q9BT49">
    <property type="development level" value="Tbio"/>
</dbReference>
<dbReference type="PRO" id="PR:Q9BT49"/>
<dbReference type="Proteomes" id="UP000005640">
    <property type="component" value="Chromosome 22"/>
</dbReference>
<dbReference type="RNAct" id="Q9BT49">
    <property type="molecule type" value="protein"/>
</dbReference>
<dbReference type="Bgee" id="ENSG00000184436">
    <property type="expression patterns" value="Expressed in adenohypophysis and 196 other cell types or tissues"/>
</dbReference>
<dbReference type="GO" id="GO:0000785">
    <property type="term" value="C:chromatin"/>
    <property type="evidence" value="ECO:0000314"/>
    <property type="project" value="ARUK-UCL"/>
</dbReference>
<dbReference type="GO" id="GO:0043231">
    <property type="term" value="C:intracellular membrane-bounded organelle"/>
    <property type="evidence" value="ECO:0000314"/>
    <property type="project" value="HPA"/>
</dbReference>
<dbReference type="GO" id="GO:0031965">
    <property type="term" value="C:nuclear membrane"/>
    <property type="evidence" value="ECO:0000314"/>
    <property type="project" value="HPA"/>
</dbReference>
<dbReference type="GO" id="GO:0016607">
    <property type="term" value="C:nuclear speck"/>
    <property type="evidence" value="ECO:0000314"/>
    <property type="project" value="UniProtKB"/>
</dbReference>
<dbReference type="GO" id="GO:0005654">
    <property type="term" value="C:nucleoplasm"/>
    <property type="evidence" value="ECO:0000314"/>
    <property type="project" value="HPA"/>
</dbReference>
<dbReference type="GO" id="GO:0005634">
    <property type="term" value="C:nucleus"/>
    <property type="evidence" value="ECO:0000318"/>
    <property type="project" value="GO_Central"/>
</dbReference>
<dbReference type="GO" id="GO:0070742">
    <property type="term" value="F:C2H2 zinc finger domain binding"/>
    <property type="evidence" value="ECO:0000314"/>
    <property type="project" value="UniProtKB"/>
</dbReference>
<dbReference type="GO" id="GO:0003677">
    <property type="term" value="F:DNA binding"/>
    <property type="evidence" value="ECO:0007669"/>
    <property type="project" value="UniProtKB-KW"/>
</dbReference>
<dbReference type="GO" id="GO:0140296">
    <property type="term" value="F:general transcription initiation factor binding"/>
    <property type="evidence" value="ECO:0000314"/>
    <property type="project" value="ARUK-UCL"/>
</dbReference>
<dbReference type="GO" id="GO:0042826">
    <property type="term" value="F:histone deacetylase binding"/>
    <property type="evidence" value="ECO:0000314"/>
    <property type="project" value="ARUK-UCL"/>
</dbReference>
<dbReference type="GO" id="GO:0140008">
    <property type="term" value="F:histone H4 reader activity"/>
    <property type="evidence" value="ECO:0000314"/>
    <property type="project" value="ARUK-UCL"/>
</dbReference>
<dbReference type="GO" id="GO:0140566">
    <property type="term" value="F:histone reader activity"/>
    <property type="evidence" value="ECO:0000314"/>
    <property type="project" value="ARUK-UCL"/>
</dbReference>
<dbReference type="GO" id="GO:0042802">
    <property type="term" value="F:identical protein binding"/>
    <property type="evidence" value="ECO:0000353"/>
    <property type="project" value="IntAct"/>
</dbReference>
<dbReference type="GO" id="GO:0001222">
    <property type="term" value="F:transcription corepressor binding"/>
    <property type="evidence" value="ECO:0000314"/>
    <property type="project" value="ARUK-UCL"/>
</dbReference>
<dbReference type="GO" id="GO:0008270">
    <property type="term" value="F:zinc ion binding"/>
    <property type="evidence" value="ECO:0007669"/>
    <property type="project" value="UniProtKB-KW"/>
</dbReference>
<dbReference type="GO" id="GO:0006325">
    <property type="term" value="P:chromatin organization"/>
    <property type="evidence" value="ECO:0000314"/>
    <property type="project" value="ARUK-UCL"/>
</dbReference>
<dbReference type="GO" id="GO:0045892">
    <property type="term" value="P:negative regulation of DNA-templated transcription"/>
    <property type="evidence" value="ECO:0000314"/>
    <property type="project" value="UniProtKB"/>
</dbReference>
<dbReference type="GO" id="GO:0000122">
    <property type="term" value="P:negative regulation of transcription by RNA polymerase II"/>
    <property type="evidence" value="ECO:0000314"/>
    <property type="project" value="ARUK-UCL"/>
</dbReference>
<dbReference type="GO" id="GO:0006355">
    <property type="term" value="P:regulation of DNA-templated transcription"/>
    <property type="evidence" value="ECO:0000318"/>
    <property type="project" value="GO_Central"/>
</dbReference>
<dbReference type="InterPro" id="IPR026519">
    <property type="entry name" value="THAP7"/>
</dbReference>
<dbReference type="InterPro" id="IPR006612">
    <property type="entry name" value="THAP_Znf"/>
</dbReference>
<dbReference type="PANTHER" id="PTHR47502">
    <property type="entry name" value="THAP DOMAIN-CONTAINING PROTEIN 7"/>
    <property type="match status" value="1"/>
</dbReference>
<dbReference type="PANTHER" id="PTHR47502:SF1">
    <property type="entry name" value="THAP DOMAIN-CONTAINING PROTEIN 7"/>
    <property type="match status" value="1"/>
</dbReference>
<dbReference type="Pfam" id="PF05485">
    <property type="entry name" value="THAP"/>
    <property type="match status" value="1"/>
</dbReference>
<dbReference type="SMART" id="SM00692">
    <property type="entry name" value="DM3"/>
    <property type="match status" value="1"/>
</dbReference>
<dbReference type="SMART" id="SM00980">
    <property type="entry name" value="THAP"/>
    <property type="match status" value="1"/>
</dbReference>
<dbReference type="SUPFAM" id="SSF57716">
    <property type="entry name" value="Glucocorticoid receptor-like (DNA-binding domain)"/>
    <property type="match status" value="1"/>
</dbReference>
<dbReference type="PROSITE" id="PS50950">
    <property type="entry name" value="ZF_THAP"/>
    <property type="match status" value="1"/>
</dbReference>
<sequence length="309" mass="34414">MPRHCSAAGCCTRDTRETRNRGISFHRLPKKDNPRRGLWLANCQRLDPSGQGLWDPASEYIYFCSKHFEEDCFELVGISGYHRLKEGAVPTIFESFSKLRRTTKTKGHSYPPGPAEVSRLRRCRKRCSEGRGPTTPFSPPPPADVTCFPVEEASAPATLPASPAGRLEPGLSSPFSDLLGPLGAQADEAGCSAQPSPERQPSPLEPRPVSPSAYMLRLPPPAGAYIQNEHSYQVGSALLWKRRAEAALDALDKAQRQLQACKRREQRLRLRLTKLQQERAREKRAQADARQTLKEHVQDFAMQLSSSMA</sequence>
<keyword id="KW-0158">Chromosome</keyword>
<keyword id="KW-0238">DNA-binding</keyword>
<keyword id="KW-0479">Metal-binding</keyword>
<keyword id="KW-0539">Nucleus</keyword>
<keyword id="KW-0597">Phosphoprotein</keyword>
<keyword id="KW-1267">Proteomics identification</keyword>
<keyword id="KW-1185">Reference proteome</keyword>
<keyword id="KW-0804">Transcription</keyword>
<keyword id="KW-0805">Transcription regulation</keyword>
<keyword id="KW-0862">Zinc</keyword>
<keyword id="KW-0863">Zinc-finger</keyword>
<accession>Q9BT49</accession>
<accession>B2RD97</accession>
<accession>D3DX40</accession>
<reference key="1">
    <citation type="journal article" date="2004" name="Genome Biol.">
        <title>A genome annotation-driven approach to cloning the human ORFeome.</title>
        <authorList>
            <person name="Collins J.E."/>
            <person name="Wright C.L."/>
            <person name="Edwards C.A."/>
            <person name="Davis M.P."/>
            <person name="Grinham J.A."/>
            <person name="Cole C.G."/>
            <person name="Goward M.E."/>
            <person name="Aguado B."/>
            <person name="Mallya M."/>
            <person name="Mokrab Y."/>
            <person name="Huckle E.J."/>
            <person name="Beare D.M."/>
            <person name="Dunham I."/>
        </authorList>
    </citation>
    <scope>NUCLEOTIDE SEQUENCE [LARGE SCALE MRNA]</scope>
    <scope>VARIANT PRO-115</scope>
</reference>
<reference key="2">
    <citation type="journal article" date="2004" name="Nat. Genet.">
        <title>Complete sequencing and characterization of 21,243 full-length human cDNAs.</title>
        <authorList>
            <person name="Ota T."/>
            <person name="Suzuki Y."/>
            <person name="Nishikawa T."/>
            <person name="Otsuki T."/>
            <person name="Sugiyama T."/>
            <person name="Irie R."/>
            <person name="Wakamatsu A."/>
            <person name="Hayashi K."/>
            <person name="Sato H."/>
            <person name="Nagai K."/>
            <person name="Kimura K."/>
            <person name="Makita H."/>
            <person name="Sekine M."/>
            <person name="Obayashi M."/>
            <person name="Nishi T."/>
            <person name="Shibahara T."/>
            <person name="Tanaka T."/>
            <person name="Ishii S."/>
            <person name="Yamamoto J."/>
            <person name="Saito K."/>
            <person name="Kawai Y."/>
            <person name="Isono Y."/>
            <person name="Nakamura Y."/>
            <person name="Nagahari K."/>
            <person name="Murakami K."/>
            <person name="Yasuda T."/>
            <person name="Iwayanagi T."/>
            <person name="Wagatsuma M."/>
            <person name="Shiratori A."/>
            <person name="Sudo H."/>
            <person name="Hosoiri T."/>
            <person name="Kaku Y."/>
            <person name="Kodaira H."/>
            <person name="Kondo H."/>
            <person name="Sugawara M."/>
            <person name="Takahashi M."/>
            <person name="Kanda K."/>
            <person name="Yokoi T."/>
            <person name="Furuya T."/>
            <person name="Kikkawa E."/>
            <person name="Omura Y."/>
            <person name="Abe K."/>
            <person name="Kamihara K."/>
            <person name="Katsuta N."/>
            <person name="Sato K."/>
            <person name="Tanikawa M."/>
            <person name="Yamazaki M."/>
            <person name="Ninomiya K."/>
            <person name="Ishibashi T."/>
            <person name="Yamashita H."/>
            <person name="Murakawa K."/>
            <person name="Fujimori K."/>
            <person name="Tanai H."/>
            <person name="Kimata M."/>
            <person name="Watanabe M."/>
            <person name="Hiraoka S."/>
            <person name="Chiba Y."/>
            <person name="Ishida S."/>
            <person name="Ono Y."/>
            <person name="Takiguchi S."/>
            <person name="Watanabe S."/>
            <person name="Yosida M."/>
            <person name="Hotuta T."/>
            <person name="Kusano J."/>
            <person name="Kanehori K."/>
            <person name="Takahashi-Fujii A."/>
            <person name="Hara H."/>
            <person name="Tanase T.-O."/>
            <person name="Nomura Y."/>
            <person name="Togiya S."/>
            <person name="Komai F."/>
            <person name="Hara R."/>
            <person name="Takeuchi K."/>
            <person name="Arita M."/>
            <person name="Imose N."/>
            <person name="Musashino K."/>
            <person name="Yuuki H."/>
            <person name="Oshima A."/>
            <person name="Sasaki N."/>
            <person name="Aotsuka S."/>
            <person name="Yoshikawa Y."/>
            <person name="Matsunawa H."/>
            <person name="Ichihara T."/>
            <person name="Shiohata N."/>
            <person name="Sano S."/>
            <person name="Moriya S."/>
            <person name="Momiyama H."/>
            <person name="Satoh N."/>
            <person name="Takami S."/>
            <person name="Terashima Y."/>
            <person name="Suzuki O."/>
            <person name="Nakagawa S."/>
            <person name="Senoh A."/>
            <person name="Mizoguchi H."/>
            <person name="Goto Y."/>
            <person name="Shimizu F."/>
            <person name="Wakebe H."/>
            <person name="Hishigaki H."/>
            <person name="Watanabe T."/>
            <person name="Sugiyama A."/>
            <person name="Takemoto M."/>
            <person name="Kawakami B."/>
            <person name="Yamazaki M."/>
            <person name="Watanabe K."/>
            <person name="Kumagai A."/>
            <person name="Itakura S."/>
            <person name="Fukuzumi Y."/>
            <person name="Fujimori Y."/>
            <person name="Komiyama M."/>
            <person name="Tashiro H."/>
            <person name="Tanigami A."/>
            <person name="Fujiwara T."/>
            <person name="Ono T."/>
            <person name="Yamada K."/>
            <person name="Fujii Y."/>
            <person name="Ozaki K."/>
            <person name="Hirao M."/>
            <person name="Ohmori Y."/>
            <person name="Kawabata A."/>
            <person name="Hikiji T."/>
            <person name="Kobatake N."/>
            <person name="Inagaki H."/>
            <person name="Ikema Y."/>
            <person name="Okamoto S."/>
            <person name="Okitani R."/>
            <person name="Kawakami T."/>
            <person name="Noguchi S."/>
            <person name="Itoh T."/>
            <person name="Shigeta K."/>
            <person name="Senba T."/>
            <person name="Matsumura K."/>
            <person name="Nakajima Y."/>
            <person name="Mizuno T."/>
            <person name="Morinaga M."/>
            <person name="Sasaki M."/>
            <person name="Togashi T."/>
            <person name="Oyama M."/>
            <person name="Hata H."/>
            <person name="Watanabe M."/>
            <person name="Komatsu T."/>
            <person name="Mizushima-Sugano J."/>
            <person name="Satoh T."/>
            <person name="Shirai Y."/>
            <person name="Takahashi Y."/>
            <person name="Nakagawa K."/>
            <person name="Okumura K."/>
            <person name="Nagase T."/>
            <person name="Nomura N."/>
            <person name="Kikuchi H."/>
            <person name="Masuho Y."/>
            <person name="Yamashita R."/>
            <person name="Nakai K."/>
            <person name="Yada T."/>
            <person name="Nakamura Y."/>
            <person name="Ohara O."/>
            <person name="Isogai T."/>
            <person name="Sugano S."/>
        </authorList>
    </citation>
    <scope>NUCLEOTIDE SEQUENCE [LARGE SCALE MRNA]</scope>
</reference>
<reference key="3">
    <citation type="journal article" date="1999" name="Nature">
        <title>The DNA sequence of human chromosome 22.</title>
        <authorList>
            <person name="Dunham I."/>
            <person name="Hunt A.R."/>
            <person name="Collins J.E."/>
            <person name="Bruskiewich R."/>
            <person name="Beare D.M."/>
            <person name="Clamp M."/>
            <person name="Smink L.J."/>
            <person name="Ainscough R."/>
            <person name="Almeida J.P."/>
            <person name="Babbage A.K."/>
            <person name="Bagguley C."/>
            <person name="Bailey J."/>
            <person name="Barlow K.F."/>
            <person name="Bates K.N."/>
            <person name="Beasley O.P."/>
            <person name="Bird C.P."/>
            <person name="Blakey S.E."/>
            <person name="Bridgeman A.M."/>
            <person name="Buck D."/>
            <person name="Burgess J."/>
            <person name="Burrill W.D."/>
            <person name="Burton J."/>
            <person name="Carder C."/>
            <person name="Carter N.P."/>
            <person name="Chen Y."/>
            <person name="Clark G."/>
            <person name="Clegg S.M."/>
            <person name="Cobley V.E."/>
            <person name="Cole C.G."/>
            <person name="Collier R.E."/>
            <person name="Connor R."/>
            <person name="Conroy D."/>
            <person name="Corby N.R."/>
            <person name="Coville G.J."/>
            <person name="Cox A.V."/>
            <person name="Davis J."/>
            <person name="Dawson E."/>
            <person name="Dhami P.D."/>
            <person name="Dockree C."/>
            <person name="Dodsworth S.J."/>
            <person name="Durbin R.M."/>
            <person name="Ellington A.G."/>
            <person name="Evans K.L."/>
            <person name="Fey J.M."/>
            <person name="Fleming K."/>
            <person name="French L."/>
            <person name="Garner A.A."/>
            <person name="Gilbert J.G.R."/>
            <person name="Goward M.E."/>
            <person name="Grafham D.V."/>
            <person name="Griffiths M.N.D."/>
            <person name="Hall C."/>
            <person name="Hall R.E."/>
            <person name="Hall-Tamlyn G."/>
            <person name="Heathcott R.W."/>
            <person name="Ho S."/>
            <person name="Holmes S."/>
            <person name="Hunt S.E."/>
            <person name="Jones M.C."/>
            <person name="Kershaw J."/>
            <person name="Kimberley A.M."/>
            <person name="King A."/>
            <person name="Laird G.K."/>
            <person name="Langford C.F."/>
            <person name="Leversha M.A."/>
            <person name="Lloyd C."/>
            <person name="Lloyd D.M."/>
            <person name="Martyn I.D."/>
            <person name="Mashreghi-Mohammadi M."/>
            <person name="Matthews L.H."/>
            <person name="Mccann O.T."/>
            <person name="Mcclay J."/>
            <person name="Mclaren S."/>
            <person name="McMurray A.A."/>
            <person name="Milne S.A."/>
            <person name="Mortimore B.J."/>
            <person name="Odell C.N."/>
            <person name="Pavitt R."/>
            <person name="Pearce A.V."/>
            <person name="Pearson D."/>
            <person name="Phillimore B.J.C.T."/>
            <person name="Phillips S.H."/>
            <person name="Plumb R.W."/>
            <person name="Ramsay H."/>
            <person name="Ramsey Y."/>
            <person name="Rogers L."/>
            <person name="Ross M.T."/>
            <person name="Scott C.E."/>
            <person name="Sehra H.K."/>
            <person name="Skuce C.D."/>
            <person name="Smalley S."/>
            <person name="Smith M.L."/>
            <person name="Soderlund C."/>
            <person name="Spragon L."/>
            <person name="Steward C.A."/>
            <person name="Sulston J.E."/>
            <person name="Swann R.M."/>
            <person name="Vaudin M."/>
            <person name="Wall M."/>
            <person name="Wallis J.M."/>
            <person name="Whiteley M.N."/>
            <person name="Willey D.L."/>
            <person name="Williams L."/>
            <person name="Williams S.A."/>
            <person name="Williamson H."/>
            <person name="Wilmer T.E."/>
            <person name="Wilming L."/>
            <person name="Wright C.L."/>
            <person name="Hubbard T."/>
            <person name="Bentley D.R."/>
            <person name="Beck S."/>
            <person name="Rogers J."/>
            <person name="Shimizu N."/>
            <person name="Minoshima S."/>
            <person name="Kawasaki K."/>
            <person name="Sasaki T."/>
            <person name="Asakawa S."/>
            <person name="Kudoh J."/>
            <person name="Shintani A."/>
            <person name="Shibuya K."/>
            <person name="Yoshizaki Y."/>
            <person name="Aoki N."/>
            <person name="Mitsuyama S."/>
            <person name="Roe B.A."/>
            <person name="Chen F."/>
            <person name="Chu L."/>
            <person name="Crabtree J."/>
            <person name="Deschamps S."/>
            <person name="Do A."/>
            <person name="Do T."/>
            <person name="Dorman A."/>
            <person name="Fang F."/>
            <person name="Fu Y."/>
            <person name="Hu P."/>
            <person name="Hua A."/>
            <person name="Kenton S."/>
            <person name="Lai H."/>
            <person name="Lao H.I."/>
            <person name="Lewis J."/>
            <person name="Lewis S."/>
            <person name="Lin S.-P."/>
            <person name="Loh P."/>
            <person name="Malaj E."/>
            <person name="Nguyen T."/>
            <person name="Pan H."/>
            <person name="Phan S."/>
            <person name="Qi S."/>
            <person name="Qian Y."/>
            <person name="Ray L."/>
            <person name="Ren Q."/>
            <person name="Shaull S."/>
            <person name="Sloan D."/>
            <person name="Song L."/>
            <person name="Wang Q."/>
            <person name="Wang Y."/>
            <person name="Wang Z."/>
            <person name="White J."/>
            <person name="Willingham D."/>
            <person name="Wu H."/>
            <person name="Yao Z."/>
            <person name="Zhan M."/>
            <person name="Zhang G."/>
            <person name="Chissoe S."/>
            <person name="Murray J."/>
            <person name="Miller N."/>
            <person name="Minx P."/>
            <person name="Fulton R."/>
            <person name="Johnson D."/>
            <person name="Bemis G."/>
            <person name="Bentley D."/>
            <person name="Bradshaw H."/>
            <person name="Bourne S."/>
            <person name="Cordes M."/>
            <person name="Du Z."/>
            <person name="Fulton L."/>
            <person name="Goela D."/>
            <person name="Graves T."/>
            <person name="Hawkins J."/>
            <person name="Hinds K."/>
            <person name="Kemp K."/>
            <person name="Latreille P."/>
            <person name="Layman D."/>
            <person name="Ozersky P."/>
            <person name="Rohlfing T."/>
            <person name="Scheet P."/>
            <person name="Walker C."/>
            <person name="Wamsley A."/>
            <person name="Wohldmann P."/>
            <person name="Pepin K."/>
            <person name="Nelson J."/>
            <person name="Korf I."/>
            <person name="Bedell J.A."/>
            <person name="Hillier L.W."/>
            <person name="Mardis E."/>
            <person name="Waterston R."/>
            <person name="Wilson R."/>
            <person name="Emanuel B.S."/>
            <person name="Shaikh T."/>
            <person name="Kurahashi H."/>
            <person name="Saitta S."/>
            <person name="Budarf M.L."/>
            <person name="McDermid H.E."/>
            <person name="Johnson A."/>
            <person name="Wong A.C.C."/>
            <person name="Morrow B.E."/>
            <person name="Edelmann L."/>
            <person name="Kim U.J."/>
            <person name="Shizuya H."/>
            <person name="Simon M.I."/>
            <person name="Dumanski J.P."/>
            <person name="Peyrard M."/>
            <person name="Kedra D."/>
            <person name="Seroussi E."/>
            <person name="Fransson I."/>
            <person name="Tapia I."/>
            <person name="Bruder C.E."/>
            <person name="O'Brien K.P."/>
            <person name="Wilkinson P."/>
            <person name="Bodenteich A."/>
            <person name="Hartman K."/>
            <person name="Hu X."/>
            <person name="Khan A.S."/>
            <person name="Lane L."/>
            <person name="Tilahun Y."/>
            <person name="Wright H."/>
        </authorList>
    </citation>
    <scope>NUCLEOTIDE SEQUENCE [LARGE SCALE GENOMIC DNA]</scope>
</reference>
<reference key="4">
    <citation type="submission" date="2005-09" db="EMBL/GenBank/DDBJ databases">
        <authorList>
            <person name="Mural R.J."/>
            <person name="Istrail S."/>
            <person name="Sutton G.G."/>
            <person name="Florea L."/>
            <person name="Halpern A.L."/>
            <person name="Mobarry C.M."/>
            <person name="Lippert R."/>
            <person name="Walenz B."/>
            <person name="Shatkay H."/>
            <person name="Dew I."/>
            <person name="Miller J.R."/>
            <person name="Flanigan M.J."/>
            <person name="Edwards N.J."/>
            <person name="Bolanos R."/>
            <person name="Fasulo D."/>
            <person name="Halldorsson B.V."/>
            <person name="Hannenhalli S."/>
            <person name="Turner R."/>
            <person name="Yooseph S."/>
            <person name="Lu F."/>
            <person name="Nusskern D.R."/>
            <person name="Shue B.C."/>
            <person name="Zheng X.H."/>
            <person name="Zhong F."/>
            <person name="Delcher A.L."/>
            <person name="Huson D.H."/>
            <person name="Kravitz S.A."/>
            <person name="Mouchard L."/>
            <person name="Reinert K."/>
            <person name="Remington K.A."/>
            <person name="Clark A.G."/>
            <person name="Waterman M.S."/>
            <person name="Eichler E.E."/>
            <person name="Adams M.D."/>
            <person name="Hunkapiller M.W."/>
            <person name="Myers E.W."/>
            <person name="Venter J.C."/>
        </authorList>
    </citation>
    <scope>NUCLEOTIDE SEQUENCE [LARGE SCALE GENOMIC DNA]</scope>
    <scope>VARIANT PRO-115</scope>
</reference>
<reference key="5">
    <citation type="journal article" date="2004" name="Genome Res.">
        <title>The status, quality, and expansion of the NIH full-length cDNA project: the Mammalian Gene Collection (MGC).</title>
        <authorList>
            <consortium name="The MGC Project Team"/>
        </authorList>
    </citation>
    <scope>NUCLEOTIDE SEQUENCE [LARGE SCALE MRNA]</scope>
    <scope>VARIANT PRO-115</scope>
    <source>
        <tissue>Lymph</tissue>
    </source>
</reference>
<reference key="6">
    <citation type="journal article" date="2005" name="J. Biol. Chem.">
        <title>Human THAP7 is a chromatin-associated, histone tail-binding protein that represses transcription via recruitment of HDAC3 and nuclear hormone receptor corepressor.</title>
        <authorList>
            <person name="Macfarlan T."/>
            <person name="Kutney S."/>
            <person name="Altman B."/>
            <person name="Montross R."/>
            <person name="Yu J."/>
            <person name="Chakravarti D."/>
        </authorList>
    </citation>
    <scope>FUNCTION</scope>
    <scope>INTERACTION WITH CHROMATIN; HDAC3 AND NUCLEAR HORMONE RECEPTOR COREPRESSORS</scope>
    <scope>TISSUE SPECIFICITY</scope>
</reference>
<reference key="7">
    <citation type="journal article" date="2008" name="Mol. Cell">
        <title>Kinase-selective enrichment enables quantitative phosphoproteomics of the kinome across the cell cycle.</title>
        <authorList>
            <person name="Daub H."/>
            <person name="Olsen J.V."/>
            <person name="Bairlein M."/>
            <person name="Gnad F."/>
            <person name="Oppermann F.S."/>
            <person name="Korner R."/>
            <person name="Greff Z."/>
            <person name="Keri G."/>
            <person name="Stemmann O."/>
            <person name="Mann M."/>
        </authorList>
    </citation>
    <scope>IDENTIFICATION BY MASS SPECTROMETRY [LARGE SCALE ANALYSIS]</scope>
    <source>
        <tissue>Cervix carcinoma</tissue>
    </source>
</reference>
<reference key="8">
    <citation type="journal article" date="2013" name="J. Proteome Res.">
        <title>Toward a comprehensive characterization of a human cancer cell phosphoproteome.</title>
        <authorList>
            <person name="Zhou H."/>
            <person name="Di Palma S."/>
            <person name="Preisinger C."/>
            <person name="Peng M."/>
            <person name="Polat A.N."/>
            <person name="Heck A.J."/>
            <person name="Mohammed S."/>
        </authorList>
    </citation>
    <scope>PHOSPHORYLATION [LARGE SCALE ANALYSIS] AT SER-210</scope>
    <scope>IDENTIFICATION BY MASS SPECTROMETRY [LARGE SCALE ANALYSIS]</scope>
    <source>
        <tissue>Erythroleukemia</tissue>
    </source>
</reference>
<reference key="9">
    <citation type="journal article" date="2014" name="J. Proteomics">
        <title>An enzyme assisted RP-RPLC approach for in-depth analysis of human liver phosphoproteome.</title>
        <authorList>
            <person name="Bian Y."/>
            <person name="Song C."/>
            <person name="Cheng K."/>
            <person name="Dong M."/>
            <person name="Wang F."/>
            <person name="Huang J."/>
            <person name="Sun D."/>
            <person name="Wang L."/>
            <person name="Ye M."/>
            <person name="Zou H."/>
        </authorList>
    </citation>
    <scope>PHOSPHORYLATION [LARGE SCALE ANALYSIS] AT SER-162</scope>
    <scope>IDENTIFICATION BY MASS SPECTROMETRY [LARGE SCALE ANALYSIS]</scope>
    <source>
        <tissue>Liver</tissue>
    </source>
</reference>
<reference key="10">
    <citation type="journal article" date="2020" name="PLoS ONE">
        <title>THAP11F80L cobalamin disorder-associated mutation reveals normal and pathogenic THAP11 functions in gene expression and cell proliferation.</title>
        <authorList>
            <person name="Dehaene H."/>
            <person name="Praz V."/>
            <person name="Lhote P."/>
            <person name="Lopes M."/>
            <person name="Herr W."/>
        </authorList>
    </citation>
    <scope>INTERACTION WITH HCFC1</scope>
    <scope>HOMODIMERIZATION</scope>
</reference>
<evidence type="ECO:0000250" key="1"/>
<evidence type="ECO:0000255" key="2">
    <source>
        <dbReference type="PROSITE-ProRule" id="PRU00309"/>
    </source>
</evidence>
<evidence type="ECO:0000256" key="3">
    <source>
        <dbReference type="SAM" id="MobiDB-lite"/>
    </source>
</evidence>
<evidence type="ECO:0000269" key="4">
    <source>
    </source>
</evidence>
<evidence type="ECO:0000269" key="5">
    <source>
    </source>
</evidence>
<evidence type="ECO:0000269" key="6">
    <source>
    </source>
</evidence>
<evidence type="ECO:0000269" key="7">
    <source>
    </source>
</evidence>
<evidence type="ECO:0000269" key="8">
    <source ref="4"/>
</evidence>
<evidence type="ECO:0007744" key="9">
    <source>
    </source>
</evidence>
<evidence type="ECO:0007744" key="10">
    <source>
    </source>
</evidence>
<gene>
    <name type="primary">THAP7</name>
</gene>
<organism>
    <name type="scientific">Homo sapiens</name>
    <name type="common">Human</name>
    <dbReference type="NCBI Taxonomy" id="9606"/>
    <lineage>
        <taxon>Eukaryota</taxon>
        <taxon>Metazoa</taxon>
        <taxon>Chordata</taxon>
        <taxon>Craniata</taxon>
        <taxon>Vertebrata</taxon>
        <taxon>Euteleostomi</taxon>
        <taxon>Mammalia</taxon>
        <taxon>Eutheria</taxon>
        <taxon>Euarchontoglires</taxon>
        <taxon>Primates</taxon>
        <taxon>Haplorrhini</taxon>
        <taxon>Catarrhini</taxon>
        <taxon>Hominidae</taxon>
        <taxon>Homo</taxon>
    </lineage>
</organism>